<feature type="chain" id="PRO_1000190060" description="Galactokinase">
    <location>
        <begin position="1"/>
        <end position="382"/>
    </location>
</feature>
<feature type="active site" description="Proton acceptor" evidence="1">
    <location>
        <position position="174"/>
    </location>
</feature>
<feature type="binding site" evidence="1">
    <location>
        <begin position="34"/>
        <end position="37"/>
    </location>
    <ligand>
        <name>substrate</name>
    </ligand>
</feature>
<feature type="binding site" evidence="1">
    <location>
        <begin position="124"/>
        <end position="130"/>
    </location>
    <ligand>
        <name>ATP</name>
        <dbReference type="ChEBI" id="CHEBI:30616"/>
    </ligand>
</feature>
<feature type="binding site" evidence="1">
    <location>
        <position position="130"/>
    </location>
    <ligand>
        <name>Mg(2+)</name>
        <dbReference type="ChEBI" id="CHEBI:18420"/>
    </ligand>
</feature>
<feature type="binding site" evidence="1">
    <location>
        <position position="162"/>
    </location>
    <ligand>
        <name>Mg(2+)</name>
        <dbReference type="ChEBI" id="CHEBI:18420"/>
    </ligand>
</feature>
<feature type="binding site" evidence="1">
    <location>
        <position position="223"/>
    </location>
    <ligand>
        <name>substrate</name>
    </ligand>
</feature>
<feature type="site" description="Transition state stabilizer" evidence="1">
    <location>
        <position position="28"/>
    </location>
</feature>
<keyword id="KW-0067">ATP-binding</keyword>
<keyword id="KW-0119">Carbohydrate metabolism</keyword>
<keyword id="KW-0963">Cytoplasm</keyword>
<keyword id="KW-0299">Galactose metabolism</keyword>
<keyword id="KW-0418">Kinase</keyword>
<keyword id="KW-0460">Magnesium</keyword>
<keyword id="KW-0479">Metal-binding</keyword>
<keyword id="KW-0547">Nucleotide-binding</keyword>
<keyword id="KW-0808">Transferase</keyword>
<protein>
    <recommendedName>
        <fullName evidence="1">Galactokinase</fullName>
        <ecNumber evidence="1">2.7.1.6</ecNumber>
    </recommendedName>
    <alternativeName>
        <fullName evidence="1">Galactose kinase</fullName>
    </alternativeName>
</protein>
<proteinExistence type="inferred from homology"/>
<accession>B7N9Z9</accession>
<evidence type="ECO:0000255" key="1">
    <source>
        <dbReference type="HAMAP-Rule" id="MF_00246"/>
    </source>
</evidence>
<reference key="1">
    <citation type="journal article" date="2009" name="PLoS Genet.">
        <title>Organised genome dynamics in the Escherichia coli species results in highly diverse adaptive paths.</title>
        <authorList>
            <person name="Touchon M."/>
            <person name="Hoede C."/>
            <person name="Tenaillon O."/>
            <person name="Barbe V."/>
            <person name="Baeriswyl S."/>
            <person name="Bidet P."/>
            <person name="Bingen E."/>
            <person name="Bonacorsi S."/>
            <person name="Bouchier C."/>
            <person name="Bouvet O."/>
            <person name="Calteau A."/>
            <person name="Chiapello H."/>
            <person name="Clermont O."/>
            <person name="Cruveiller S."/>
            <person name="Danchin A."/>
            <person name="Diard M."/>
            <person name="Dossat C."/>
            <person name="Karoui M.E."/>
            <person name="Frapy E."/>
            <person name="Garry L."/>
            <person name="Ghigo J.M."/>
            <person name="Gilles A.M."/>
            <person name="Johnson J."/>
            <person name="Le Bouguenec C."/>
            <person name="Lescat M."/>
            <person name="Mangenot S."/>
            <person name="Martinez-Jehanne V."/>
            <person name="Matic I."/>
            <person name="Nassif X."/>
            <person name="Oztas S."/>
            <person name="Petit M.A."/>
            <person name="Pichon C."/>
            <person name="Rouy Z."/>
            <person name="Ruf C.S."/>
            <person name="Schneider D."/>
            <person name="Tourret J."/>
            <person name="Vacherie B."/>
            <person name="Vallenet D."/>
            <person name="Medigue C."/>
            <person name="Rocha E.P.C."/>
            <person name="Denamur E."/>
        </authorList>
    </citation>
    <scope>NUCLEOTIDE SEQUENCE [LARGE SCALE GENOMIC DNA]</scope>
    <source>
        <strain>UMN026 / ExPEC</strain>
    </source>
</reference>
<gene>
    <name evidence="1" type="primary">galK</name>
    <name type="ordered locus">ECUMN_0841</name>
</gene>
<name>GAL1_ECOLU</name>
<comment type="function">
    <text evidence="1">Catalyzes the transfer of the gamma-phosphate of ATP to D-galactose to form alpha-D-galactose-1-phosphate (Gal-1-P).</text>
</comment>
<comment type="catalytic activity">
    <reaction evidence="1">
        <text>alpha-D-galactose + ATP = alpha-D-galactose 1-phosphate + ADP + H(+)</text>
        <dbReference type="Rhea" id="RHEA:13553"/>
        <dbReference type="ChEBI" id="CHEBI:15378"/>
        <dbReference type="ChEBI" id="CHEBI:28061"/>
        <dbReference type="ChEBI" id="CHEBI:30616"/>
        <dbReference type="ChEBI" id="CHEBI:58336"/>
        <dbReference type="ChEBI" id="CHEBI:456216"/>
        <dbReference type="EC" id="2.7.1.6"/>
    </reaction>
</comment>
<comment type="pathway">
    <text evidence="1">Carbohydrate metabolism; galactose metabolism.</text>
</comment>
<comment type="subcellular location">
    <subcellularLocation>
        <location evidence="1">Cytoplasm</location>
    </subcellularLocation>
</comment>
<comment type="similarity">
    <text evidence="1">Belongs to the GHMP kinase family. GalK subfamily.</text>
</comment>
<sequence>MSLKEKTQSLFANAFGYPATHTIQAPGRVNLIGEHTDYNDGFVLPCAIDYQTVISCAPRDDHKVRVMAADYENQLDEFSLDAPIVAHENYQWANYVRGVVKHLQLRNNSFGGVDMVISGNVPQGAGLSSSASLEVAVGTVLQQLYHLPLDGAQIALNGQEAENQFVGCNCGIMDQLISALGKKDHALLIDCRSLGTKAVSMPKGVAVVIINSNFKRTLVGSEYNTRREQCETGARFFQQPALRDVTIEEFNAVAHELDPIVAKRVRHILTENARTVEAASALEQGDLKRMGELMAESHASMRDDFEITVPQIDTLVEIVKAVIGDKGGVRMTGGGFGGCIVALIPEELVPAVQQAVAEQYEAKTGIKETFYVCKPSQGAGQC</sequence>
<organism>
    <name type="scientific">Escherichia coli O17:K52:H18 (strain UMN026 / ExPEC)</name>
    <dbReference type="NCBI Taxonomy" id="585056"/>
    <lineage>
        <taxon>Bacteria</taxon>
        <taxon>Pseudomonadati</taxon>
        <taxon>Pseudomonadota</taxon>
        <taxon>Gammaproteobacteria</taxon>
        <taxon>Enterobacterales</taxon>
        <taxon>Enterobacteriaceae</taxon>
        <taxon>Escherichia</taxon>
    </lineage>
</organism>
<dbReference type="EC" id="2.7.1.6" evidence="1"/>
<dbReference type="EMBL" id="CU928163">
    <property type="protein sequence ID" value="CAR12050.1"/>
    <property type="molecule type" value="Genomic_DNA"/>
</dbReference>
<dbReference type="RefSeq" id="WP_000053399.1">
    <property type="nucleotide sequence ID" value="NC_011751.1"/>
</dbReference>
<dbReference type="RefSeq" id="YP_002411596.1">
    <property type="nucleotide sequence ID" value="NC_011751.1"/>
</dbReference>
<dbReference type="SMR" id="B7N9Z9"/>
<dbReference type="STRING" id="585056.ECUMN_0841"/>
<dbReference type="KEGG" id="eum:ECUMN_0841"/>
<dbReference type="PATRIC" id="fig|585056.7.peg.1042"/>
<dbReference type="HOGENOM" id="CLU_017814_2_1_6"/>
<dbReference type="UniPathway" id="UPA00214"/>
<dbReference type="Proteomes" id="UP000007097">
    <property type="component" value="Chromosome"/>
</dbReference>
<dbReference type="GO" id="GO:0005829">
    <property type="term" value="C:cytosol"/>
    <property type="evidence" value="ECO:0007669"/>
    <property type="project" value="TreeGrafter"/>
</dbReference>
<dbReference type="GO" id="GO:0005524">
    <property type="term" value="F:ATP binding"/>
    <property type="evidence" value="ECO:0007669"/>
    <property type="project" value="UniProtKB-UniRule"/>
</dbReference>
<dbReference type="GO" id="GO:0004335">
    <property type="term" value="F:galactokinase activity"/>
    <property type="evidence" value="ECO:0007669"/>
    <property type="project" value="UniProtKB-UniRule"/>
</dbReference>
<dbReference type="GO" id="GO:0000287">
    <property type="term" value="F:magnesium ion binding"/>
    <property type="evidence" value="ECO:0007669"/>
    <property type="project" value="UniProtKB-UniRule"/>
</dbReference>
<dbReference type="GO" id="GO:0006012">
    <property type="term" value="P:galactose metabolic process"/>
    <property type="evidence" value="ECO:0007669"/>
    <property type="project" value="UniProtKB-UniRule"/>
</dbReference>
<dbReference type="FunFam" id="3.30.230.10:FF:000017">
    <property type="entry name" value="Galactokinase"/>
    <property type="match status" value="1"/>
</dbReference>
<dbReference type="FunFam" id="3.30.70.890:FF:000001">
    <property type="entry name" value="Galactokinase"/>
    <property type="match status" value="1"/>
</dbReference>
<dbReference type="Gene3D" id="3.30.230.10">
    <property type="match status" value="1"/>
</dbReference>
<dbReference type="Gene3D" id="3.30.70.890">
    <property type="entry name" value="GHMP kinase, C-terminal domain"/>
    <property type="match status" value="1"/>
</dbReference>
<dbReference type="HAMAP" id="MF_00246">
    <property type="entry name" value="Galactokinase"/>
    <property type="match status" value="1"/>
</dbReference>
<dbReference type="InterPro" id="IPR000705">
    <property type="entry name" value="Galactokinase"/>
</dbReference>
<dbReference type="InterPro" id="IPR022963">
    <property type="entry name" value="Galactokinase_bac"/>
</dbReference>
<dbReference type="InterPro" id="IPR019741">
    <property type="entry name" value="Galactokinase_CS"/>
</dbReference>
<dbReference type="InterPro" id="IPR019539">
    <property type="entry name" value="GalKase_N"/>
</dbReference>
<dbReference type="InterPro" id="IPR013750">
    <property type="entry name" value="GHMP_kinase_C_dom"/>
</dbReference>
<dbReference type="InterPro" id="IPR036554">
    <property type="entry name" value="GHMP_kinase_C_sf"/>
</dbReference>
<dbReference type="InterPro" id="IPR006204">
    <property type="entry name" value="GHMP_kinase_N_dom"/>
</dbReference>
<dbReference type="InterPro" id="IPR006203">
    <property type="entry name" value="GHMP_knse_ATP-bd_CS"/>
</dbReference>
<dbReference type="InterPro" id="IPR006206">
    <property type="entry name" value="Mevalonate/galactokinase"/>
</dbReference>
<dbReference type="InterPro" id="IPR020568">
    <property type="entry name" value="Ribosomal_Su5_D2-typ_SF"/>
</dbReference>
<dbReference type="InterPro" id="IPR014721">
    <property type="entry name" value="Ribsml_uS5_D2-typ_fold_subgr"/>
</dbReference>
<dbReference type="NCBIfam" id="TIGR00131">
    <property type="entry name" value="gal_kin"/>
    <property type="match status" value="1"/>
</dbReference>
<dbReference type="NCBIfam" id="NF003472">
    <property type="entry name" value="PRK05101.1"/>
    <property type="match status" value="1"/>
</dbReference>
<dbReference type="PANTHER" id="PTHR10457:SF7">
    <property type="entry name" value="GALACTOKINASE-RELATED"/>
    <property type="match status" value="1"/>
</dbReference>
<dbReference type="PANTHER" id="PTHR10457">
    <property type="entry name" value="MEVALONATE KINASE/GALACTOKINASE"/>
    <property type="match status" value="1"/>
</dbReference>
<dbReference type="Pfam" id="PF10509">
    <property type="entry name" value="GalKase_gal_bdg"/>
    <property type="match status" value="1"/>
</dbReference>
<dbReference type="Pfam" id="PF08544">
    <property type="entry name" value="GHMP_kinases_C"/>
    <property type="match status" value="1"/>
</dbReference>
<dbReference type="Pfam" id="PF00288">
    <property type="entry name" value="GHMP_kinases_N"/>
    <property type="match status" value="1"/>
</dbReference>
<dbReference type="PIRSF" id="PIRSF000530">
    <property type="entry name" value="Galactokinase"/>
    <property type="match status" value="1"/>
</dbReference>
<dbReference type="PRINTS" id="PR00473">
    <property type="entry name" value="GALCTOKINASE"/>
</dbReference>
<dbReference type="PRINTS" id="PR00959">
    <property type="entry name" value="MEVGALKINASE"/>
</dbReference>
<dbReference type="SUPFAM" id="SSF55060">
    <property type="entry name" value="GHMP Kinase, C-terminal domain"/>
    <property type="match status" value="1"/>
</dbReference>
<dbReference type="SUPFAM" id="SSF54211">
    <property type="entry name" value="Ribosomal protein S5 domain 2-like"/>
    <property type="match status" value="1"/>
</dbReference>
<dbReference type="PROSITE" id="PS00106">
    <property type="entry name" value="GALACTOKINASE"/>
    <property type="match status" value="1"/>
</dbReference>
<dbReference type="PROSITE" id="PS00627">
    <property type="entry name" value="GHMP_KINASES_ATP"/>
    <property type="match status" value="1"/>
</dbReference>